<proteinExistence type="inferred from homology"/>
<protein>
    <recommendedName>
        <fullName evidence="1">Glutamate--tRNA ligase</fullName>
        <ecNumber evidence="1">6.1.1.17</ecNumber>
    </recommendedName>
    <alternativeName>
        <fullName evidence="1">Glutamyl-tRNA synthetase</fullName>
        <shortName evidence="1">GluRS</shortName>
    </alternativeName>
</protein>
<evidence type="ECO:0000255" key="1">
    <source>
        <dbReference type="HAMAP-Rule" id="MF_00022"/>
    </source>
</evidence>
<reference key="1">
    <citation type="submission" date="2006-06" db="EMBL/GenBank/DDBJ databases">
        <title>Complete sequence of Pseudoalteromonas atlantica T6c.</title>
        <authorList>
            <consortium name="US DOE Joint Genome Institute"/>
            <person name="Copeland A."/>
            <person name="Lucas S."/>
            <person name="Lapidus A."/>
            <person name="Barry K."/>
            <person name="Detter J.C."/>
            <person name="Glavina del Rio T."/>
            <person name="Hammon N."/>
            <person name="Israni S."/>
            <person name="Dalin E."/>
            <person name="Tice H."/>
            <person name="Pitluck S."/>
            <person name="Saunders E."/>
            <person name="Brettin T."/>
            <person name="Bruce D."/>
            <person name="Han C."/>
            <person name="Tapia R."/>
            <person name="Gilna P."/>
            <person name="Schmutz J."/>
            <person name="Larimer F."/>
            <person name="Land M."/>
            <person name="Hauser L."/>
            <person name="Kyrpides N."/>
            <person name="Kim E."/>
            <person name="Karls A.C."/>
            <person name="Bartlett D."/>
            <person name="Higgins B.P."/>
            <person name="Richardson P."/>
        </authorList>
    </citation>
    <scope>NUCLEOTIDE SEQUENCE [LARGE SCALE GENOMIC DNA]</scope>
    <source>
        <strain>T6c / ATCC BAA-1087</strain>
    </source>
</reference>
<sequence length="469" mass="52867">MTAVTRFAPSPTGFLHVGGARTALYSWLYAKSQGGKFVLRIEDTDIERSTQEAIDAILEGMEWLGLTWDDGPYYQTKRFDRYKALINEMLEEGKAYKCFMSSAELDEIREKQKANGEKPRYPGTWRDRTDHPEGEPFVIRFKNPLEGKVLVKDHIRGNIEIANSELDDLIILRSDGTPTYNFCVVVDDWDMGITHVVRGEDHINNTPRQINILQALGAPVPEYAHVSMILGDDGKKLSKRHGAVSVMQYRDDGFLPQALLNYLVRLGWSYGDQEIFSKEEMIELFSLDAIGQSASAFNTDKLIWLNQHYIKELPVSEVLPYAKWHFEQQGIDVSNGPALEEVIKVQADRVKTLKELAEISGYFYQEYEDFDEKAAKKHLRPVAQEPLEAVKAALMALSTWNAETIHEAINKTAETLGVGMGKVGMPLRVAATGSGNSPSLDVTLNLLKPEQIAQRIDKALIYIANRQQS</sequence>
<organism>
    <name type="scientific">Pseudoalteromonas atlantica (strain T6c / ATCC BAA-1087)</name>
    <dbReference type="NCBI Taxonomy" id="3042615"/>
    <lineage>
        <taxon>Bacteria</taxon>
        <taxon>Pseudomonadati</taxon>
        <taxon>Pseudomonadota</taxon>
        <taxon>Gammaproteobacteria</taxon>
        <taxon>Alteromonadales</taxon>
        <taxon>Alteromonadaceae</taxon>
        <taxon>Paraglaciecola</taxon>
    </lineage>
</organism>
<comment type="function">
    <text evidence="1">Catalyzes the attachment of glutamate to tRNA(Glu) in a two-step reaction: glutamate is first activated by ATP to form Glu-AMP and then transferred to the acceptor end of tRNA(Glu).</text>
</comment>
<comment type="catalytic activity">
    <reaction evidence="1">
        <text>tRNA(Glu) + L-glutamate + ATP = L-glutamyl-tRNA(Glu) + AMP + diphosphate</text>
        <dbReference type="Rhea" id="RHEA:23540"/>
        <dbReference type="Rhea" id="RHEA-COMP:9663"/>
        <dbReference type="Rhea" id="RHEA-COMP:9680"/>
        <dbReference type="ChEBI" id="CHEBI:29985"/>
        <dbReference type="ChEBI" id="CHEBI:30616"/>
        <dbReference type="ChEBI" id="CHEBI:33019"/>
        <dbReference type="ChEBI" id="CHEBI:78442"/>
        <dbReference type="ChEBI" id="CHEBI:78520"/>
        <dbReference type="ChEBI" id="CHEBI:456215"/>
        <dbReference type="EC" id="6.1.1.17"/>
    </reaction>
</comment>
<comment type="subunit">
    <text evidence="1">Monomer.</text>
</comment>
<comment type="subcellular location">
    <subcellularLocation>
        <location evidence="1">Cytoplasm</location>
    </subcellularLocation>
</comment>
<comment type="similarity">
    <text evidence="1">Belongs to the class-I aminoacyl-tRNA synthetase family. Glutamate--tRNA ligase type 1 subfamily.</text>
</comment>
<keyword id="KW-0030">Aminoacyl-tRNA synthetase</keyword>
<keyword id="KW-0067">ATP-binding</keyword>
<keyword id="KW-0963">Cytoplasm</keyword>
<keyword id="KW-0436">Ligase</keyword>
<keyword id="KW-0547">Nucleotide-binding</keyword>
<keyword id="KW-0648">Protein biosynthesis</keyword>
<dbReference type="EC" id="6.1.1.17" evidence="1"/>
<dbReference type="EMBL" id="CP000388">
    <property type="protein sequence ID" value="ABG41427.1"/>
    <property type="molecule type" value="Genomic_DNA"/>
</dbReference>
<dbReference type="RefSeq" id="WP_011575683.1">
    <property type="nucleotide sequence ID" value="NC_008228.1"/>
</dbReference>
<dbReference type="SMR" id="Q15RR1"/>
<dbReference type="STRING" id="342610.Patl_2919"/>
<dbReference type="KEGG" id="pat:Patl_2919"/>
<dbReference type="eggNOG" id="COG0008">
    <property type="taxonomic scope" value="Bacteria"/>
</dbReference>
<dbReference type="HOGENOM" id="CLU_015768_6_0_6"/>
<dbReference type="OrthoDB" id="9807503at2"/>
<dbReference type="Proteomes" id="UP000001981">
    <property type="component" value="Chromosome"/>
</dbReference>
<dbReference type="GO" id="GO:0005829">
    <property type="term" value="C:cytosol"/>
    <property type="evidence" value="ECO:0007669"/>
    <property type="project" value="TreeGrafter"/>
</dbReference>
<dbReference type="GO" id="GO:0005524">
    <property type="term" value="F:ATP binding"/>
    <property type="evidence" value="ECO:0007669"/>
    <property type="project" value="UniProtKB-UniRule"/>
</dbReference>
<dbReference type="GO" id="GO:0004818">
    <property type="term" value="F:glutamate-tRNA ligase activity"/>
    <property type="evidence" value="ECO:0007669"/>
    <property type="project" value="UniProtKB-UniRule"/>
</dbReference>
<dbReference type="GO" id="GO:0000049">
    <property type="term" value="F:tRNA binding"/>
    <property type="evidence" value="ECO:0007669"/>
    <property type="project" value="InterPro"/>
</dbReference>
<dbReference type="GO" id="GO:0008270">
    <property type="term" value="F:zinc ion binding"/>
    <property type="evidence" value="ECO:0007669"/>
    <property type="project" value="InterPro"/>
</dbReference>
<dbReference type="GO" id="GO:0006424">
    <property type="term" value="P:glutamyl-tRNA aminoacylation"/>
    <property type="evidence" value="ECO:0007669"/>
    <property type="project" value="UniProtKB-UniRule"/>
</dbReference>
<dbReference type="CDD" id="cd00808">
    <property type="entry name" value="GluRS_core"/>
    <property type="match status" value="1"/>
</dbReference>
<dbReference type="FunFam" id="3.40.50.620:FF:000007">
    <property type="entry name" value="Glutamate--tRNA ligase"/>
    <property type="match status" value="1"/>
</dbReference>
<dbReference type="Gene3D" id="1.10.10.350">
    <property type="match status" value="1"/>
</dbReference>
<dbReference type="Gene3D" id="1.10.8.70">
    <property type="entry name" value="Glutamate-tRNA synthetase, class I, anticodon-binding domain 1"/>
    <property type="match status" value="1"/>
</dbReference>
<dbReference type="Gene3D" id="3.40.50.620">
    <property type="entry name" value="HUPs"/>
    <property type="match status" value="1"/>
</dbReference>
<dbReference type="HAMAP" id="MF_00022">
    <property type="entry name" value="Glu_tRNA_synth_type1"/>
    <property type="match status" value="1"/>
</dbReference>
<dbReference type="InterPro" id="IPR045462">
    <property type="entry name" value="aa-tRNA-synth_I_cd-bd"/>
</dbReference>
<dbReference type="InterPro" id="IPR020751">
    <property type="entry name" value="aa-tRNA-synth_I_codon-bd_sub2"/>
</dbReference>
<dbReference type="InterPro" id="IPR001412">
    <property type="entry name" value="aa-tRNA-synth_I_CS"/>
</dbReference>
<dbReference type="InterPro" id="IPR008925">
    <property type="entry name" value="aa_tRNA-synth_I_cd-bd_sf"/>
</dbReference>
<dbReference type="InterPro" id="IPR004527">
    <property type="entry name" value="Glu-tRNA-ligase_bac/mito"/>
</dbReference>
<dbReference type="InterPro" id="IPR020752">
    <property type="entry name" value="Glu-tRNA-synth_I_codon-bd_sub1"/>
</dbReference>
<dbReference type="InterPro" id="IPR000924">
    <property type="entry name" value="Glu/Gln-tRNA-synth"/>
</dbReference>
<dbReference type="InterPro" id="IPR020058">
    <property type="entry name" value="Glu/Gln-tRNA-synth_Ib_cat-dom"/>
</dbReference>
<dbReference type="InterPro" id="IPR049940">
    <property type="entry name" value="GluQ/Sye"/>
</dbReference>
<dbReference type="InterPro" id="IPR033910">
    <property type="entry name" value="GluRS_core"/>
</dbReference>
<dbReference type="InterPro" id="IPR014729">
    <property type="entry name" value="Rossmann-like_a/b/a_fold"/>
</dbReference>
<dbReference type="NCBIfam" id="TIGR00464">
    <property type="entry name" value="gltX_bact"/>
    <property type="match status" value="1"/>
</dbReference>
<dbReference type="PANTHER" id="PTHR43311">
    <property type="entry name" value="GLUTAMATE--TRNA LIGASE"/>
    <property type="match status" value="1"/>
</dbReference>
<dbReference type="PANTHER" id="PTHR43311:SF2">
    <property type="entry name" value="GLUTAMATE--TRNA LIGASE, MITOCHONDRIAL-RELATED"/>
    <property type="match status" value="1"/>
</dbReference>
<dbReference type="Pfam" id="PF19269">
    <property type="entry name" value="Anticodon_2"/>
    <property type="match status" value="1"/>
</dbReference>
<dbReference type="Pfam" id="PF00749">
    <property type="entry name" value="tRNA-synt_1c"/>
    <property type="match status" value="1"/>
</dbReference>
<dbReference type="PRINTS" id="PR00987">
    <property type="entry name" value="TRNASYNTHGLU"/>
</dbReference>
<dbReference type="SUPFAM" id="SSF48163">
    <property type="entry name" value="An anticodon-binding domain of class I aminoacyl-tRNA synthetases"/>
    <property type="match status" value="1"/>
</dbReference>
<dbReference type="SUPFAM" id="SSF52374">
    <property type="entry name" value="Nucleotidylyl transferase"/>
    <property type="match status" value="1"/>
</dbReference>
<dbReference type="PROSITE" id="PS00178">
    <property type="entry name" value="AA_TRNA_LIGASE_I"/>
    <property type="match status" value="1"/>
</dbReference>
<accession>Q15RR1</accession>
<name>SYE_PSEA6</name>
<gene>
    <name evidence="1" type="primary">gltX</name>
    <name type="ordered locus">Patl_2919</name>
</gene>
<feature type="chain" id="PRO_1000001936" description="Glutamate--tRNA ligase">
    <location>
        <begin position="1"/>
        <end position="469"/>
    </location>
</feature>
<feature type="short sequence motif" description="'HIGH' region" evidence="1">
    <location>
        <begin position="9"/>
        <end position="19"/>
    </location>
</feature>
<feature type="short sequence motif" description="'KMSKS' region" evidence="1">
    <location>
        <begin position="236"/>
        <end position="240"/>
    </location>
</feature>
<feature type="binding site" evidence="1">
    <location>
        <position position="239"/>
    </location>
    <ligand>
        <name>ATP</name>
        <dbReference type="ChEBI" id="CHEBI:30616"/>
    </ligand>
</feature>